<reference key="1">
    <citation type="submission" date="2005-10" db="EMBL/GenBank/DDBJ databases">
        <title>Complete sequence of Pelobacter carbinolicus DSM 2380.</title>
        <authorList>
            <person name="Copeland A."/>
            <person name="Lucas S."/>
            <person name="Lapidus A."/>
            <person name="Barry K."/>
            <person name="Detter J.C."/>
            <person name="Glavina T."/>
            <person name="Hammon N."/>
            <person name="Israni S."/>
            <person name="Pitluck S."/>
            <person name="Chertkov O."/>
            <person name="Schmutz J."/>
            <person name="Larimer F."/>
            <person name="Land M."/>
            <person name="Kyrpides N."/>
            <person name="Ivanova N."/>
            <person name="Richardson P."/>
        </authorList>
    </citation>
    <scope>NUCLEOTIDE SEQUENCE [LARGE SCALE GENOMIC DNA]</scope>
    <source>
        <strain>DSM 2380 / NBRC 103641 / GraBd1</strain>
    </source>
</reference>
<evidence type="ECO:0000255" key="1">
    <source>
        <dbReference type="HAMAP-Rule" id="MF_01364"/>
    </source>
</evidence>
<evidence type="ECO:0000305" key="2"/>
<feature type="chain" id="PRO_0000269127" description="Small ribosomal subunit protein uS14">
    <location>
        <begin position="1"/>
        <end position="61"/>
    </location>
</feature>
<feature type="binding site" evidence="1">
    <location>
        <position position="24"/>
    </location>
    <ligand>
        <name>Zn(2+)</name>
        <dbReference type="ChEBI" id="CHEBI:29105"/>
    </ligand>
</feature>
<feature type="binding site" evidence="1">
    <location>
        <position position="27"/>
    </location>
    <ligand>
        <name>Zn(2+)</name>
        <dbReference type="ChEBI" id="CHEBI:29105"/>
    </ligand>
</feature>
<feature type="binding site" evidence="1">
    <location>
        <position position="40"/>
    </location>
    <ligand>
        <name>Zn(2+)</name>
        <dbReference type="ChEBI" id="CHEBI:29105"/>
    </ligand>
</feature>
<feature type="binding site" evidence="1">
    <location>
        <position position="43"/>
    </location>
    <ligand>
        <name>Zn(2+)</name>
        <dbReference type="ChEBI" id="CHEBI:29105"/>
    </ligand>
</feature>
<sequence length="61" mass="7199">MAKKSMMIKAARSNKFKVRKYNRCPLCGRPRAYYRKFDMCRICLRKLALEGKLPGVIKSSW</sequence>
<organism>
    <name type="scientific">Syntrophotalea carbinolica (strain DSM 2380 / NBRC 103641 / GraBd1)</name>
    <name type="common">Pelobacter carbinolicus</name>
    <dbReference type="NCBI Taxonomy" id="338963"/>
    <lineage>
        <taxon>Bacteria</taxon>
        <taxon>Pseudomonadati</taxon>
        <taxon>Thermodesulfobacteriota</taxon>
        <taxon>Desulfuromonadia</taxon>
        <taxon>Desulfuromonadales</taxon>
        <taxon>Syntrophotaleaceae</taxon>
        <taxon>Syntrophotalea</taxon>
    </lineage>
</organism>
<name>RS14Z_SYNC1</name>
<dbReference type="EMBL" id="CP000142">
    <property type="protein sequence ID" value="ABA87973.1"/>
    <property type="molecule type" value="Genomic_DNA"/>
</dbReference>
<dbReference type="RefSeq" id="WP_011340416.1">
    <property type="nucleotide sequence ID" value="NC_007498.2"/>
</dbReference>
<dbReference type="SMR" id="Q3A6N4"/>
<dbReference type="STRING" id="338963.Pcar_0714"/>
<dbReference type="KEGG" id="pca:Pcar_0714"/>
<dbReference type="eggNOG" id="COG0199">
    <property type="taxonomic scope" value="Bacteria"/>
</dbReference>
<dbReference type="HOGENOM" id="CLU_139869_3_0_7"/>
<dbReference type="OrthoDB" id="9810484at2"/>
<dbReference type="Proteomes" id="UP000002534">
    <property type="component" value="Chromosome"/>
</dbReference>
<dbReference type="GO" id="GO:0005737">
    <property type="term" value="C:cytoplasm"/>
    <property type="evidence" value="ECO:0007669"/>
    <property type="project" value="UniProtKB-ARBA"/>
</dbReference>
<dbReference type="GO" id="GO:0015935">
    <property type="term" value="C:small ribosomal subunit"/>
    <property type="evidence" value="ECO:0007669"/>
    <property type="project" value="TreeGrafter"/>
</dbReference>
<dbReference type="GO" id="GO:0019843">
    <property type="term" value="F:rRNA binding"/>
    <property type="evidence" value="ECO:0007669"/>
    <property type="project" value="UniProtKB-UniRule"/>
</dbReference>
<dbReference type="GO" id="GO:0003735">
    <property type="term" value="F:structural constituent of ribosome"/>
    <property type="evidence" value="ECO:0007669"/>
    <property type="project" value="InterPro"/>
</dbReference>
<dbReference type="GO" id="GO:0008270">
    <property type="term" value="F:zinc ion binding"/>
    <property type="evidence" value="ECO:0007669"/>
    <property type="project" value="UniProtKB-UniRule"/>
</dbReference>
<dbReference type="GO" id="GO:0006412">
    <property type="term" value="P:translation"/>
    <property type="evidence" value="ECO:0007669"/>
    <property type="project" value="UniProtKB-UniRule"/>
</dbReference>
<dbReference type="FunFam" id="4.10.830.10:FF:000001">
    <property type="entry name" value="30S ribosomal protein S14 type Z"/>
    <property type="match status" value="1"/>
</dbReference>
<dbReference type="Gene3D" id="4.10.830.10">
    <property type="entry name" value="30s Ribosomal Protein S14, Chain N"/>
    <property type="match status" value="1"/>
</dbReference>
<dbReference type="HAMAP" id="MF_01364_B">
    <property type="entry name" value="Ribosomal_uS14_2_B"/>
    <property type="match status" value="1"/>
</dbReference>
<dbReference type="InterPro" id="IPR001209">
    <property type="entry name" value="Ribosomal_uS14"/>
</dbReference>
<dbReference type="InterPro" id="IPR023053">
    <property type="entry name" value="Ribosomal_uS14_bact"/>
</dbReference>
<dbReference type="InterPro" id="IPR018271">
    <property type="entry name" value="Ribosomal_uS14_CS"/>
</dbReference>
<dbReference type="InterPro" id="IPR043140">
    <property type="entry name" value="Ribosomal_uS14_sf"/>
</dbReference>
<dbReference type="NCBIfam" id="NF005974">
    <property type="entry name" value="PRK08061.1"/>
    <property type="match status" value="1"/>
</dbReference>
<dbReference type="PANTHER" id="PTHR19836">
    <property type="entry name" value="30S RIBOSOMAL PROTEIN S14"/>
    <property type="match status" value="1"/>
</dbReference>
<dbReference type="PANTHER" id="PTHR19836:SF19">
    <property type="entry name" value="SMALL RIBOSOMAL SUBUNIT PROTEIN US14M"/>
    <property type="match status" value="1"/>
</dbReference>
<dbReference type="Pfam" id="PF00253">
    <property type="entry name" value="Ribosomal_S14"/>
    <property type="match status" value="1"/>
</dbReference>
<dbReference type="SUPFAM" id="SSF57716">
    <property type="entry name" value="Glucocorticoid receptor-like (DNA-binding domain)"/>
    <property type="match status" value="1"/>
</dbReference>
<dbReference type="PROSITE" id="PS00527">
    <property type="entry name" value="RIBOSOMAL_S14"/>
    <property type="match status" value="1"/>
</dbReference>
<accession>Q3A6N4</accession>
<protein>
    <recommendedName>
        <fullName evidence="1">Small ribosomal subunit protein uS14</fullName>
    </recommendedName>
    <alternativeName>
        <fullName evidence="2">30S ribosomal protein S14 type Z</fullName>
    </alternativeName>
</protein>
<comment type="function">
    <text evidence="1">Binds 16S rRNA, required for the assembly of 30S particles and may also be responsible for determining the conformation of the 16S rRNA at the A site.</text>
</comment>
<comment type="cofactor">
    <cofactor evidence="1">
        <name>Zn(2+)</name>
        <dbReference type="ChEBI" id="CHEBI:29105"/>
    </cofactor>
    <text evidence="1">Binds 1 zinc ion per subunit.</text>
</comment>
<comment type="subunit">
    <text evidence="1">Part of the 30S ribosomal subunit. Contacts proteins S3 and S10.</text>
</comment>
<comment type="similarity">
    <text evidence="1">Belongs to the universal ribosomal protein uS14 family. Zinc-binding uS14 subfamily.</text>
</comment>
<proteinExistence type="inferred from homology"/>
<keyword id="KW-0479">Metal-binding</keyword>
<keyword id="KW-1185">Reference proteome</keyword>
<keyword id="KW-0687">Ribonucleoprotein</keyword>
<keyword id="KW-0689">Ribosomal protein</keyword>
<keyword id="KW-0694">RNA-binding</keyword>
<keyword id="KW-0699">rRNA-binding</keyword>
<keyword id="KW-0862">Zinc</keyword>
<gene>
    <name evidence="1" type="primary">rpsZ</name>
    <name evidence="1" type="synonym">rpsN</name>
    <name type="ordered locus">Pcar_0714</name>
</gene>